<proteinExistence type="inferred from homology"/>
<dbReference type="EC" id="4.1.2.40" evidence="1"/>
<dbReference type="EMBL" id="CP000247">
    <property type="protein sequence ID" value="ABG71211.1"/>
    <property type="molecule type" value="Genomic_DNA"/>
</dbReference>
<dbReference type="RefSeq" id="WP_000022766.1">
    <property type="nucleotide sequence ID" value="NC_008253.1"/>
</dbReference>
<dbReference type="SMR" id="Q0TCW8"/>
<dbReference type="GeneID" id="75203745"/>
<dbReference type="KEGG" id="ecp:ECP_3229"/>
<dbReference type="HOGENOM" id="CLU_040088_0_1_6"/>
<dbReference type="UniPathway" id="UPA00704">
    <property type="reaction ID" value="UER00716"/>
</dbReference>
<dbReference type="Proteomes" id="UP000009182">
    <property type="component" value="Chromosome"/>
</dbReference>
<dbReference type="GO" id="GO:0005829">
    <property type="term" value="C:cytosol"/>
    <property type="evidence" value="ECO:0007669"/>
    <property type="project" value="TreeGrafter"/>
</dbReference>
<dbReference type="GO" id="GO:0009025">
    <property type="term" value="F:tagatose-bisphosphate aldolase activity"/>
    <property type="evidence" value="ECO:0007669"/>
    <property type="project" value="UniProtKB-UniRule"/>
</dbReference>
<dbReference type="GO" id="GO:0008270">
    <property type="term" value="F:zinc ion binding"/>
    <property type="evidence" value="ECO:0007669"/>
    <property type="project" value="UniProtKB-UniRule"/>
</dbReference>
<dbReference type="GO" id="GO:0005975">
    <property type="term" value="P:carbohydrate metabolic process"/>
    <property type="evidence" value="ECO:0007669"/>
    <property type="project" value="InterPro"/>
</dbReference>
<dbReference type="GO" id="GO:2001059">
    <property type="term" value="P:D-tagatose 6-phosphate catabolic process"/>
    <property type="evidence" value="ECO:0007669"/>
    <property type="project" value="UniProtKB-UniRule"/>
</dbReference>
<dbReference type="CDD" id="cd00453">
    <property type="entry name" value="FTBP_aldolase_II"/>
    <property type="match status" value="1"/>
</dbReference>
<dbReference type="FunFam" id="3.20.20.70:FF:000043">
    <property type="entry name" value="D-tagatose-1,6-bisphosphate aldolase subunit GatY"/>
    <property type="match status" value="1"/>
</dbReference>
<dbReference type="Gene3D" id="3.20.20.70">
    <property type="entry name" value="Aldolase class I"/>
    <property type="match status" value="1"/>
</dbReference>
<dbReference type="HAMAP" id="MF_01293">
    <property type="entry name" value="TagBP_aldolase_KbaY"/>
    <property type="match status" value="1"/>
</dbReference>
<dbReference type="InterPro" id="IPR013785">
    <property type="entry name" value="Aldolase_TIM"/>
</dbReference>
<dbReference type="InterPro" id="IPR050246">
    <property type="entry name" value="Class_II_FBP_aldolase"/>
</dbReference>
<dbReference type="InterPro" id="IPR000771">
    <property type="entry name" value="FBA_II"/>
</dbReference>
<dbReference type="InterPro" id="IPR023788">
    <property type="entry name" value="TagBP_ald_KbaY"/>
</dbReference>
<dbReference type="InterPro" id="IPR011288">
    <property type="entry name" value="TagBP_ald_KbaY/GatY"/>
</dbReference>
<dbReference type="NCBIfam" id="TIGR00167">
    <property type="entry name" value="cbbA"/>
    <property type="match status" value="1"/>
</dbReference>
<dbReference type="NCBIfam" id="NF006626">
    <property type="entry name" value="PRK09195.1"/>
    <property type="match status" value="1"/>
</dbReference>
<dbReference type="NCBIfam" id="NF009374">
    <property type="entry name" value="PRK12737.1"/>
    <property type="match status" value="1"/>
</dbReference>
<dbReference type="NCBIfam" id="NF009375">
    <property type="entry name" value="PRK12738.1"/>
    <property type="match status" value="1"/>
</dbReference>
<dbReference type="NCBIfam" id="TIGR01858">
    <property type="entry name" value="tag_bisphos_ald"/>
    <property type="match status" value="1"/>
</dbReference>
<dbReference type="PANTHER" id="PTHR30304">
    <property type="entry name" value="D-TAGATOSE-1,6-BISPHOSPHATE ALDOLASE"/>
    <property type="match status" value="1"/>
</dbReference>
<dbReference type="PANTHER" id="PTHR30304:SF0">
    <property type="entry name" value="D-TAGATOSE-1,6-BISPHOSPHATE ALDOLASE SUBUNIT GATY-RELATED"/>
    <property type="match status" value="1"/>
</dbReference>
<dbReference type="Pfam" id="PF01116">
    <property type="entry name" value="F_bP_aldolase"/>
    <property type="match status" value="1"/>
</dbReference>
<dbReference type="PIRSF" id="PIRSF001359">
    <property type="entry name" value="F_bP_aldolase_II"/>
    <property type="match status" value="1"/>
</dbReference>
<dbReference type="SUPFAM" id="SSF51569">
    <property type="entry name" value="Aldolase"/>
    <property type="match status" value="1"/>
</dbReference>
<dbReference type="PROSITE" id="PS00602">
    <property type="entry name" value="ALDOLASE_CLASS_II_1"/>
    <property type="match status" value="1"/>
</dbReference>
<dbReference type="PROSITE" id="PS00806">
    <property type="entry name" value="ALDOLASE_CLASS_II_2"/>
    <property type="match status" value="1"/>
</dbReference>
<name>KBAY_ECOL5</name>
<evidence type="ECO:0000255" key="1">
    <source>
        <dbReference type="HAMAP-Rule" id="MF_01293"/>
    </source>
</evidence>
<accession>Q0TCW8</accession>
<protein>
    <recommendedName>
        <fullName evidence="1">D-tagatose-1,6-bisphosphate aldolase subunit KbaY</fullName>
        <shortName evidence="1">TBPA</shortName>
        <shortName evidence="1">TagBP aldolase</shortName>
        <ecNumber evidence="1">4.1.2.40</ecNumber>
    </recommendedName>
    <alternativeName>
        <fullName evidence="1">D-tagatose-bisphosphate aldolase class II</fullName>
    </alternativeName>
    <alternativeName>
        <fullName evidence="1">Ketose 1,6-bisphosphate aldolase class II</fullName>
    </alternativeName>
    <alternativeName>
        <fullName evidence="1">Tagatose-bisphosphate aldolase</fullName>
    </alternativeName>
</protein>
<keyword id="KW-0456">Lyase</keyword>
<keyword id="KW-0479">Metal-binding</keyword>
<keyword id="KW-0862">Zinc</keyword>
<gene>
    <name evidence="1" type="primary">kbaY</name>
    <name type="ordered locus">ECP_3229</name>
</gene>
<feature type="chain" id="PRO_0000355327" description="D-tagatose-1,6-bisphosphate aldolase subunit KbaY">
    <location>
        <begin position="1"/>
        <end position="286"/>
    </location>
</feature>
<feature type="active site" description="Proton donor" evidence="1">
    <location>
        <position position="82"/>
    </location>
</feature>
<feature type="binding site" evidence="1">
    <location>
        <position position="83"/>
    </location>
    <ligand>
        <name>Zn(2+)</name>
        <dbReference type="ChEBI" id="CHEBI:29105"/>
        <note>catalytic</note>
    </ligand>
</feature>
<feature type="binding site" evidence="1">
    <location>
        <position position="180"/>
    </location>
    <ligand>
        <name>Zn(2+)</name>
        <dbReference type="ChEBI" id="CHEBI:29105"/>
        <note>catalytic</note>
    </ligand>
</feature>
<feature type="binding site" evidence="1">
    <location>
        <position position="181"/>
    </location>
    <ligand>
        <name>dihydroxyacetone phosphate</name>
        <dbReference type="ChEBI" id="CHEBI:57642"/>
    </ligand>
</feature>
<feature type="binding site" evidence="1">
    <location>
        <position position="208"/>
    </location>
    <ligand>
        <name>Zn(2+)</name>
        <dbReference type="ChEBI" id="CHEBI:29105"/>
        <note>catalytic</note>
    </ligand>
</feature>
<feature type="binding site" evidence="1">
    <location>
        <begin position="209"/>
        <end position="211"/>
    </location>
    <ligand>
        <name>dihydroxyacetone phosphate</name>
        <dbReference type="ChEBI" id="CHEBI:57642"/>
    </ligand>
</feature>
<feature type="binding site" evidence="1">
    <location>
        <begin position="230"/>
        <end position="233"/>
    </location>
    <ligand>
        <name>dihydroxyacetone phosphate</name>
        <dbReference type="ChEBI" id="CHEBI:57642"/>
    </ligand>
</feature>
<organism>
    <name type="scientific">Escherichia coli O6:K15:H31 (strain 536 / UPEC)</name>
    <dbReference type="NCBI Taxonomy" id="362663"/>
    <lineage>
        <taxon>Bacteria</taxon>
        <taxon>Pseudomonadati</taxon>
        <taxon>Pseudomonadota</taxon>
        <taxon>Gammaproteobacteria</taxon>
        <taxon>Enterobacterales</taxon>
        <taxon>Enterobacteriaceae</taxon>
        <taxon>Escherichia</taxon>
    </lineage>
</organism>
<comment type="function">
    <text evidence="1">Catalytic subunit of the tagatose-1,6-bisphosphate aldolase KbaYZ, which catalyzes the reversible aldol condensation of dihydroxyacetone phosphate (DHAP or glycerone-phosphate) with glyceraldehyde 3-phosphate (G3P) to produce tagatose 1,6-bisphosphate (TBP). Requires KbaZ subunit for full activity and stability.</text>
</comment>
<comment type="catalytic activity">
    <reaction evidence="1">
        <text>D-tagatofuranose 1,6-bisphosphate = D-glyceraldehyde 3-phosphate + dihydroxyacetone phosphate</text>
        <dbReference type="Rhea" id="RHEA:22948"/>
        <dbReference type="ChEBI" id="CHEBI:57642"/>
        <dbReference type="ChEBI" id="CHEBI:58694"/>
        <dbReference type="ChEBI" id="CHEBI:59776"/>
        <dbReference type="EC" id="4.1.2.40"/>
    </reaction>
</comment>
<comment type="cofactor">
    <cofactor evidence="1">
        <name>Zn(2+)</name>
        <dbReference type="ChEBI" id="CHEBI:29105"/>
    </cofactor>
    <text evidence="1">Binds 1 zinc ion per subunit.</text>
</comment>
<comment type="pathway">
    <text evidence="1">Carbohydrate metabolism; D-tagatose 6-phosphate degradation; D-glyceraldehyde 3-phosphate and glycerone phosphate from D-tagatose 6-phosphate: step 2/2.</text>
</comment>
<comment type="subunit">
    <text evidence="1">Homotetramer. Forms a complex with KbaZ.</text>
</comment>
<comment type="similarity">
    <text evidence="1">Belongs to the class II fructose-bisphosphate aldolase family. TagBP aldolase KbaY subfamily.</text>
</comment>
<sequence length="286" mass="31294">MSIISTKYLLQDAQANGYAVPAFNIHNAETIQAILEVCSEMRSPVILAGTPGTFKHIALEEIYALCSAYSTTYNMPLALHLDHHESLDDIRRKVHAGVRSAMIDGSHFPFAENVKLVKSVVDFCHSQDCSVEAELGRLGGVEDDMSVDAESAFLTDPQEAKRFVELTGVDSLAVAIGTAHGLYSKTPKIDFQRLAEIREVVDVPLVLHGASDVPDEFVRRTIELGVTKVNVATELKIAFAGAVKAWFAENPQGNDPRYYMRVGMDAMKEVVRNKINVCGSANRISA</sequence>
<reference key="1">
    <citation type="journal article" date="2006" name="Mol. Microbiol.">
        <title>Role of pathogenicity island-associated integrases in the genome plasticity of uropathogenic Escherichia coli strain 536.</title>
        <authorList>
            <person name="Hochhut B."/>
            <person name="Wilde C."/>
            <person name="Balling G."/>
            <person name="Middendorf B."/>
            <person name="Dobrindt U."/>
            <person name="Brzuszkiewicz E."/>
            <person name="Gottschalk G."/>
            <person name="Carniel E."/>
            <person name="Hacker J."/>
        </authorList>
    </citation>
    <scope>NUCLEOTIDE SEQUENCE [LARGE SCALE GENOMIC DNA]</scope>
    <source>
        <strain>536 / UPEC</strain>
    </source>
</reference>